<gene>
    <name evidence="1" type="primary">murI</name>
    <name type="ordered locus">CHY_0306</name>
</gene>
<feature type="chain" id="PRO_1000078555" description="Glutamate racemase">
    <location>
        <begin position="1"/>
        <end position="265"/>
    </location>
</feature>
<feature type="active site" description="Proton donor/acceptor" evidence="1">
    <location>
        <position position="75"/>
    </location>
</feature>
<feature type="active site" description="Proton donor/acceptor" evidence="1">
    <location>
        <position position="183"/>
    </location>
</feature>
<feature type="binding site" evidence="1">
    <location>
        <begin position="12"/>
        <end position="13"/>
    </location>
    <ligand>
        <name>substrate</name>
    </ligand>
</feature>
<feature type="binding site" evidence="1">
    <location>
        <begin position="44"/>
        <end position="45"/>
    </location>
    <ligand>
        <name>substrate</name>
    </ligand>
</feature>
<feature type="binding site" evidence="1">
    <location>
        <begin position="76"/>
        <end position="77"/>
    </location>
    <ligand>
        <name>substrate</name>
    </ligand>
</feature>
<feature type="binding site" evidence="1">
    <location>
        <begin position="184"/>
        <end position="185"/>
    </location>
    <ligand>
        <name>substrate</name>
    </ligand>
</feature>
<sequence length="265" mass="29668">MDKASLGIGIFDSGVGGVTVLKELINLLPGENFYYLGDTAHVPYGSKSKEELLILGDAIIRFFLKLGVKMVVFACNTSSAITLPILKERYPVLMEGMLEPLRKNMPAKAKVGVLATEATVKSGLYQKKLMETNKFQEVYMIACPQYVPLIEKGIVSGKEVEEATREYFEPLLKEEVRDVVLGCTHYPFLTETIQKLYPKIQVIDPAAYVAREVYRKLKENKLLGENGGKVQFYVTGDEKSLKNLGSLYLGYNIDRVQKIDLEVIV</sequence>
<name>MURI_CARHZ</name>
<proteinExistence type="inferred from homology"/>
<protein>
    <recommendedName>
        <fullName evidence="1">Glutamate racemase</fullName>
        <ecNumber evidence="1">5.1.1.3</ecNumber>
    </recommendedName>
</protein>
<comment type="function">
    <text evidence="1">Provides the (R)-glutamate required for cell wall biosynthesis.</text>
</comment>
<comment type="catalytic activity">
    <reaction evidence="1">
        <text>L-glutamate = D-glutamate</text>
        <dbReference type="Rhea" id="RHEA:12813"/>
        <dbReference type="ChEBI" id="CHEBI:29985"/>
        <dbReference type="ChEBI" id="CHEBI:29986"/>
        <dbReference type="EC" id="5.1.1.3"/>
    </reaction>
</comment>
<comment type="pathway">
    <text evidence="1">Cell wall biogenesis; peptidoglycan biosynthesis.</text>
</comment>
<comment type="similarity">
    <text evidence="1">Belongs to the aspartate/glutamate racemases family.</text>
</comment>
<evidence type="ECO:0000255" key="1">
    <source>
        <dbReference type="HAMAP-Rule" id="MF_00258"/>
    </source>
</evidence>
<dbReference type="EC" id="5.1.1.3" evidence="1"/>
<dbReference type="EMBL" id="CP000141">
    <property type="protein sequence ID" value="ABB14358.1"/>
    <property type="molecule type" value="Genomic_DNA"/>
</dbReference>
<dbReference type="RefSeq" id="WP_011343252.1">
    <property type="nucleotide sequence ID" value="NC_007503.1"/>
</dbReference>
<dbReference type="SMR" id="Q3AFA8"/>
<dbReference type="FunCoup" id="Q3AFA8">
    <property type="interactions" value="222"/>
</dbReference>
<dbReference type="STRING" id="246194.CHY_0306"/>
<dbReference type="KEGG" id="chy:CHY_0306"/>
<dbReference type="eggNOG" id="COG0796">
    <property type="taxonomic scope" value="Bacteria"/>
</dbReference>
<dbReference type="HOGENOM" id="CLU_052344_0_2_9"/>
<dbReference type="InParanoid" id="Q3AFA8"/>
<dbReference type="UniPathway" id="UPA00219"/>
<dbReference type="Proteomes" id="UP000002706">
    <property type="component" value="Chromosome"/>
</dbReference>
<dbReference type="GO" id="GO:0008881">
    <property type="term" value="F:glutamate racemase activity"/>
    <property type="evidence" value="ECO:0007669"/>
    <property type="project" value="UniProtKB-UniRule"/>
</dbReference>
<dbReference type="GO" id="GO:0071555">
    <property type="term" value="P:cell wall organization"/>
    <property type="evidence" value="ECO:0007669"/>
    <property type="project" value="UniProtKB-KW"/>
</dbReference>
<dbReference type="GO" id="GO:0009252">
    <property type="term" value="P:peptidoglycan biosynthetic process"/>
    <property type="evidence" value="ECO:0007669"/>
    <property type="project" value="UniProtKB-UniRule"/>
</dbReference>
<dbReference type="GO" id="GO:0008360">
    <property type="term" value="P:regulation of cell shape"/>
    <property type="evidence" value="ECO:0007669"/>
    <property type="project" value="UniProtKB-KW"/>
</dbReference>
<dbReference type="FunFam" id="3.40.50.1860:FF:000001">
    <property type="entry name" value="Glutamate racemase"/>
    <property type="match status" value="1"/>
</dbReference>
<dbReference type="Gene3D" id="3.40.50.1860">
    <property type="match status" value="2"/>
</dbReference>
<dbReference type="HAMAP" id="MF_00258">
    <property type="entry name" value="Glu_racemase"/>
    <property type="match status" value="1"/>
</dbReference>
<dbReference type="InterPro" id="IPR015942">
    <property type="entry name" value="Asp/Glu/hydantoin_racemase"/>
</dbReference>
<dbReference type="InterPro" id="IPR001920">
    <property type="entry name" value="Asp/Glu_race"/>
</dbReference>
<dbReference type="InterPro" id="IPR033134">
    <property type="entry name" value="Asp/Glu_racemase_AS_2"/>
</dbReference>
<dbReference type="InterPro" id="IPR004391">
    <property type="entry name" value="Glu_race"/>
</dbReference>
<dbReference type="NCBIfam" id="TIGR00067">
    <property type="entry name" value="glut_race"/>
    <property type="match status" value="1"/>
</dbReference>
<dbReference type="PANTHER" id="PTHR21198">
    <property type="entry name" value="GLUTAMATE RACEMASE"/>
    <property type="match status" value="1"/>
</dbReference>
<dbReference type="PANTHER" id="PTHR21198:SF2">
    <property type="entry name" value="GLUTAMATE RACEMASE"/>
    <property type="match status" value="1"/>
</dbReference>
<dbReference type="Pfam" id="PF01177">
    <property type="entry name" value="Asp_Glu_race"/>
    <property type="match status" value="1"/>
</dbReference>
<dbReference type="SUPFAM" id="SSF53681">
    <property type="entry name" value="Aspartate/glutamate racemase"/>
    <property type="match status" value="2"/>
</dbReference>
<dbReference type="PROSITE" id="PS00924">
    <property type="entry name" value="ASP_GLU_RACEMASE_2"/>
    <property type="match status" value="1"/>
</dbReference>
<keyword id="KW-0133">Cell shape</keyword>
<keyword id="KW-0961">Cell wall biogenesis/degradation</keyword>
<keyword id="KW-0413">Isomerase</keyword>
<keyword id="KW-0573">Peptidoglycan synthesis</keyword>
<keyword id="KW-1185">Reference proteome</keyword>
<reference key="1">
    <citation type="journal article" date="2005" name="PLoS Genet.">
        <title>Life in hot carbon monoxide: the complete genome sequence of Carboxydothermus hydrogenoformans Z-2901.</title>
        <authorList>
            <person name="Wu M."/>
            <person name="Ren Q."/>
            <person name="Durkin A.S."/>
            <person name="Daugherty S.C."/>
            <person name="Brinkac L.M."/>
            <person name="Dodson R.J."/>
            <person name="Madupu R."/>
            <person name="Sullivan S.A."/>
            <person name="Kolonay J.F."/>
            <person name="Nelson W.C."/>
            <person name="Tallon L.J."/>
            <person name="Jones K.M."/>
            <person name="Ulrich L.E."/>
            <person name="Gonzalez J.M."/>
            <person name="Zhulin I.B."/>
            <person name="Robb F.T."/>
            <person name="Eisen J.A."/>
        </authorList>
    </citation>
    <scope>NUCLEOTIDE SEQUENCE [LARGE SCALE GENOMIC DNA]</scope>
    <source>
        <strain>ATCC BAA-161 / DSM 6008 / Z-2901</strain>
    </source>
</reference>
<organism>
    <name type="scientific">Carboxydothermus hydrogenoformans (strain ATCC BAA-161 / DSM 6008 / Z-2901)</name>
    <dbReference type="NCBI Taxonomy" id="246194"/>
    <lineage>
        <taxon>Bacteria</taxon>
        <taxon>Bacillati</taxon>
        <taxon>Bacillota</taxon>
        <taxon>Clostridia</taxon>
        <taxon>Thermoanaerobacterales</taxon>
        <taxon>Thermoanaerobacteraceae</taxon>
        <taxon>Carboxydothermus</taxon>
    </lineage>
</organism>
<accession>Q3AFA8</accession>